<evidence type="ECO:0000255" key="1">
    <source>
        <dbReference type="HAMAP-Rule" id="MF_01062"/>
    </source>
</evidence>
<name>PSRP_MARN8</name>
<reference key="1">
    <citation type="journal article" date="2011" name="Appl. Environ. Microbiol.">
        <title>Genomic potential of Marinobacter aquaeolei, a biogeochemical 'opportunitroph'.</title>
        <authorList>
            <person name="Singer E."/>
            <person name="Webb E.A."/>
            <person name="Nelson W.C."/>
            <person name="Heidelberg J.F."/>
            <person name="Ivanova N."/>
            <person name="Pati A."/>
            <person name="Edwards K.J."/>
        </authorList>
    </citation>
    <scope>NUCLEOTIDE SEQUENCE [LARGE SCALE GENOMIC DNA]</scope>
    <source>
        <strain>ATCC 700491 / DSM 11845 / VT8</strain>
    </source>
</reference>
<comment type="function">
    <text evidence="1">Bifunctional serine/threonine kinase and phosphorylase involved in the regulation of the phosphoenolpyruvate synthase (PEPS) by catalyzing its phosphorylation/dephosphorylation.</text>
</comment>
<comment type="catalytic activity">
    <reaction evidence="1">
        <text>[pyruvate, water dikinase] + ADP = [pyruvate, water dikinase]-phosphate + AMP + H(+)</text>
        <dbReference type="Rhea" id="RHEA:46020"/>
        <dbReference type="Rhea" id="RHEA-COMP:11425"/>
        <dbReference type="Rhea" id="RHEA-COMP:11426"/>
        <dbReference type="ChEBI" id="CHEBI:15378"/>
        <dbReference type="ChEBI" id="CHEBI:43176"/>
        <dbReference type="ChEBI" id="CHEBI:68546"/>
        <dbReference type="ChEBI" id="CHEBI:456215"/>
        <dbReference type="ChEBI" id="CHEBI:456216"/>
        <dbReference type="EC" id="2.7.11.33"/>
    </reaction>
</comment>
<comment type="catalytic activity">
    <reaction evidence="1">
        <text>[pyruvate, water dikinase]-phosphate + phosphate + H(+) = [pyruvate, water dikinase] + diphosphate</text>
        <dbReference type="Rhea" id="RHEA:48580"/>
        <dbReference type="Rhea" id="RHEA-COMP:11425"/>
        <dbReference type="Rhea" id="RHEA-COMP:11426"/>
        <dbReference type="ChEBI" id="CHEBI:15378"/>
        <dbReference type="ChEBI" id="CHEBI:33019"/>
        <dbReference type="ChEBI" id="CHEBI:43176"/>
        <dbReference type="ChEBI" id="CHEBI:43474"/>
        <dbReference type="ChEBI" id="CHEBI:68546"/>
        <dbReference type="EC" id="2.7.4.28"/>
    </reaction>
</comment>
<comment type="similarity">
    <text evidence="1">Belongs to the pyruvate, phosphate/water dikinase regulatory protein family. PSRP subfamily.</text>
</comment>
<organism>
    <name type="scientific">Marinobacter nauticus (strain ATCC 700491 / DSM 11845 / VT8)</name>
    <name type="common">Marinobacter aquaeolei</name>
    <dbReference type="NCBI Taxonomy" id="351348"/>
    <lineage>
        <taxon>Bacteria</taxon>
        <taxon>Pseudomonadati</taxon>
        <taxon>Pseudomonadota</taxon>
        <taxon>Gammaproteobacteria</taxon>
        <taxon>Pseudomonadales</taxon>
        <taxon>Marinobacteraceae</taxon>
        <taxon>Marinobacter</taxon>
    </lineage>
</organism>
<gene>
    <name type="ordered locus">Maqu_1884</name>
</gene>
<protein>
    <recommendedName>
        <fullName evidence="1">Putative phosphoenolpyruvate synthase regulatory protein</fullName>
        <shortName evidence="1">PEP synthase regulatory protein</shortName>
        <shortName evidence="1">PSRP</shortName>
        <ecNumber evidence="1">2.7.11.33</ecNumber>
        <ecNumber evidence="1">2.7.4.28</ecNumber>
    </recommendedName>
    <alternativeName>
        <fullName evidence="1">Pyruvate, water dikinase regulatory protein</fullName>
    </alternativeName>
</protein>
<accession>A1U1U7</accession>
<feature type="chain" id="PRO_0000316698" description="Putative phosphoenolpyruvate synthase regulatory protein">
    <location>
        <begin position="1"/>
        <end position="271"/>
    </location>
</feature>
<feature type="binding site" evidence="1">
    <location>
        <begin position="152"/>
        <end position="159"/>
    </location>
    <ligand>
        <name>ADP</name>
        <dbReference type="ChEBI" id="CHEBI:456216"/>
    </ligand>
</feature>
<keyword id="KW-0418">Kinase</keyword>
<keyword id="KW-0547">Nucleotide-binding</keyword>
<keyword id="KW-0723">Serine/threonine-protein kinase</keyword>
<keyword id="KW-0808">Transferase</keyword>
<dbReference type="EC" id="2.7.11.33" evidence="1"/>
<dbReference type="EC" id="2.7.4.28" evidence="1"/>
<dbReference type="EMBL" id="CP000514">
    <property type="protein sequence ID" value="ABM18966.1"/>
    <property type="molecule type" value="Genomic_DNA"/>
</dbReference>
<dbReference type="RefSeq" id="WP_011785359.1">
    <property type="nucleotide sequence ID" value="NC_008740.1"/>
</dbReference>
<dbReference type="SMR" id="A1U1U7"/>
<dbReference type="STRING" id="351348.Maqu_1884"/>
<dbReference type="KEGG" id="maq:Maqu_1884"/>
<dbReference type="eggNOG" id="COG1806">
    <property type="taxonomic scope" value="Bacteria"/>
</dbReference>
<dbReference type="HOGENOM" id="CLU_046206_1_0_6"/>
<dbReference type="OrthoDB" id="9782201at2"/>
<dbReference type="Proteomes" id="UP000000998">
    <property type="component" value="Chromosome"/>
</dbReference>
<dbReference type="GO" id="GO:0043531">
    <property type="term" value="F:ADP binding"/>
    <property type="evidence" value="ECO:0007669"/>
    <property type="project" value="UniProtKB-UniRule"/>
</dbReference>
<dbReference type="GO" id="GO:0005524">
    <property type="term" value="F:ATP binding"/>
    <property type="evidence" value="ECO:0007669"/>
    <property type="project" value="InterPro"/>
</dbReference>
<dbReference type="GO" id="GO:0016776">
    <property type="term" value="F:phosphotransferase activity, phosphate group as acceptor"/>
    <property type="evidence" value="ECO:0007669"/>
    <property type="project" value="UniProtKB-UniRule"/>
</dbReference>
<dbReference type="GO" id="GO:0004674">
    <property type="term" value="F:protein serine/threonine kinase activity"/>
    <property type="evidence" value="ECO:0007669"/>
    <property type="project" value="UniProtKB-UniRule"/>
</dbReference>
<dbReference type="HAMAP" id="MF_01062">
    <property type="entry name" value="PSRP"/>
    <property type="match status" value="1"/>
</dbReference>
<dbReference type="InterPro" id="IPR005177">
    <property type="entry name" value="Kinase-pyrophosphorylase"/>
</dbReference>
<dbReference type="InterPro" id="IPR026530">
    <property type="entry name" value="PSRP"/>
</dbReference>
<dbReference type="NCBIfam" id="NF003742">
    <property type="entry name" value="PRK05339.1"/>
    <property type="match status" value="1"/>
</dbReference>
<dbReference type="PANTHER" id="PTHR31756">
    <property type="entry name" value="PYRUVATE, PHOSPHATE DIKINASE REGULATORY PROTEIN 1, CHLOROPLASTIC"/>
    <property type="match status" value="1"/>
</dbReference>
<dbReference type="PANTHER" id="PTHR31756:SF3">
    <property type="entry name" value="PYRUVATE, PHOSPHATE DIKINASE REGULATORY PROTEIN 1, CHLOROPLASTIC"/>
    <property type="match status" value="1"/>
</dbReference>
<dbReference type="Pfam" id="PF03618">
    <property type="entry name" value="Kinase-PPPase"/>
    <property type="match status" value="1"/>
</dbReference>
<sequence length="271" mass="30765">MKRTAFFISDGTGLTAEALGHALLAQFEKIEFERVTVPYIDDEEKARDLVSRINKASEIDGERPLVFDTIVNGGIREIISRADGFMVDIFGTFLNPLEQELNSSSSYSVGKSHSINNAGSYERRIHAVNFALDNDDGARTRHYDEADLILIGASRSGKTPTCLYLALQYGIKAANYPITEEDLDDQKMPAALRPHKEKLFGLTIEPERLATIRNERRPNSRYSSLQQCMHEIEEIELMYKRERIPYLNTTAYSVEEISTRIMVTTGLKRHR</sequence>
<proteinExistence type="inferred from homology"/>